<sequence length="674" mass="72269">MLSSTFVRTKAGRSKPVRLTAVIAAALFLAGCPSQAPQTPPANIQDEASASSDYYLQQLQQSSNDNKADWQLLAIRALLREGKLPQASEQLNQLPKNLSSVQQVESQLLTAELQVANKSYVSARSTLGHIDSGSLSANQLVRFYQAQIAVNQGKASLPLIRAYIAQEPLLTGKAHQNNLDQTWQSLLQLTPQDMNSLVINANENVLQGWLDLLRVYQDNKQDPDLLKAGIKDWQNRYPQNPAAKTLPTQLNQVLHFTQASTSKIALLLPLNGQAKVFADAIQKGFEAAKNGVTPSTPVQQQQPASVPEQAAQPASTDPNANGAVSTSAPDAAPVTAAQPSAPSTAPITPPQAANAQIKVYDTSSQPLAALLTQAQQDGATLVVGPLLKENVDQLASSTTTLNVLALNQPETPKDNPNICYFALSPEDEARDAARHIWEQQKRQPLLLIPRGAFGDRVAKAFNQEWQKLGGQTVLQQGIGSASELRQMVNSGGIRMSGTPISTAPAPQAVTIAGLTIPAPPSDTPATSGGSVDSVYIVATQSQLTLIKPMIDMATNSRSKPAMYASSRSYQAGAGPDFRLEMEGLQFSDIPLLAGANPQLLQQASSQFRNDYSLVRLYAMGMDAWTLSNHFAEMRQLPGFQVSGTTGVLTAAPGCVINRKLPWLQYRQGTVVPVS</sequence>
<evidence type="ECO:0000255" key="1">
    <source>
        <dbReference type="HAMAP-Rule" id="MF_01890"/>
    </source>
</evidence>
<evidence type="ECO:0000256" key="2">
    <source>
        <dbReference type="SAM" id="MobiDB-lite"/>
    </source>
</evidence>
<dbReference type="EMBL" id="CP000826">
    <property type="protein sequence ID" value="ABV43430.1"/>
    <property type="molecule type" value="Genomic_DNA"/>
</dbReference>
<dbReference type="SMR" id="A8GJZ0"/>
<dbReference type="STRING" id="399741.Spro_4336"/>
<dbReference type="KEGG" id="spe:Spro_4336"/>
<dbReference type="eggNOG" id="COG3107">
    <property type="taxonomic scope" value="Bacteria"/>
</dbReference>
<dbReference type="HOGENOM" id="CLU_026091_1_1_6"/>
<dbReference type="OrthoDB" id="6708821at2"/>
<dbReference type="GO" id="GO:0031241">
    <property type="term" value="C:periplasmic side of cell outer membrane"/>
    <property type="evidence" value="ECO:0007669"/>
    <property type="project" value="UniProtKB-UniRule"/>
</dbReference>
<dbReference type="GO" id="GO:0030234">
    <property type="term" value="F:enzyme regulator activity"/>
    <property type="evidence" value="ECO:0007669"/>
    <property type="project" value="UniProtKB-UniRule"/>
</dbReference>
<dbReference type="GO" id="GO:0009252">
    <property type="term" value="P:peptidoglycan biosynthetic process"/>
    <property type="evidence" value="ECO:0007669"/>
    <property type="project" value="UniProtKB-UniRule"/>
</dbReference>
<dbReference type="GO" id="GO:0008360">
    <property type="term" value="P:regulation of cell shape"/>
    <property type="evidence" value="ECO:0007669"/>
    <property type="project" value="UniProtKB-KW"/>
</dbReference>
<dbReference type="CDD" id="cd06339">
    <property type="entry name" value="PBP1_YraM_LppC_lipoprotein-like"/>
    <property type="match status" value="1"/>
</dbReference>
<dbReference type="Gene3D" id="1.25.40.650">
    <property type="match status" value="1"/>
</dbReference>
<dbReference type="Gene3D" id="3.40.50.2300">
    <property type="match status" value="2"/>
</dbReference>
<dbReference type="Gene3D" id="1.25.40.10">
    <property type="entry name" value="Tetratricopeptide repeat domain"/>
    <property type="match status" value="1"/>
</dbReference>
<dbReference type="HAMAP" id="MF_01890">
    <property type="entry name" value="LpoA"/>
    <property type="match status" value="1"/>
</dbReference>
<dbReference type="InterPro" id="IPR007443">
    <property type="entry name" value="LpoA"/>
</dbReference>
<dbReference type="InterPro" id="IPR028082">
    <property type="entry name" value="Peripla_BP_I"/>
</dbReference>
<dbReference type="InterPro" id="IPR011990">
    <property type="entry name" value="TPR-like_helical_dom_sf"/>
</dbReference>
<dbReference type="PANTHER" id="PTHR38038">
    <property type="entry name" value="PENICILLIN-BINDING PROTEIN ACTIVATOR LPOA"/>
    <property type="match status" value="1"/>
</dbReference>
<dbReference type="PANTHER" id="PTHR38038:SF1">
    <property type="entry name" value="PENICILLIN-BINDING PROTEIN ACTIVATOR LPOA"/>
    <property type="match status" value="1"/>
</dbReference>
<dbReference type="Pfam" id="PF04348">
    <property type="entry name" value="LppC"/>
    <property type="match status" value="2"/>
</dbReference>
<dbReference type="SUPFAM" id="SSF53822">
    <property type="entry name" value="Periplasmic binding protein-like I"/>
    <property type="match status" value="1"/>
</dbReference>
<organism>
    <name type="scientific">Serratia proteamaculans (strain 568)</name>
    <dbReference type="NCBI Taxonomy" id="399741"/>
    <lineage>
        <taxon>Bacteria</taxon>
        <taxon>Pseudomonadati</taxon>
        <taxon>Pseudomonadota</taxon>
        <taxon>Gammaproteobacteria</taxon>
        <taxon>Enterobacterales</taxon>
        <taxon>Yersiniaceae</taxon>
        <taxon>Serratia</taxon>
    </lineage>
</organism>
<feature type="signal peptide" evidence="1">
    <location>
        <begin position="1"/>
        <end position="31"/>
    </location>
</feature>
<feature type="chain" id="PRO_5000279767" description="Penicillin-binding protein activator LpoA">
    <location>
        <begin position="32"/>
        <end position="674"/>
    </location>
</feature>
<feature type="region of interest" description="Disordered" evidence="2">
    <location>
        <begin position="291"/>
        <end position="349"/>
    </location>
</feature>
<feature type="compositionally biased region" description="Low complexity" evidence="2">
    <location>
        <begin position="292"/>
        <end position="315"/>
    </location>
</feature>
<feature type="compositionally biased region" description="Polar residues" evidence="2">
    <location>
        <begin position="316"/>
        <end position="328"/>
    </location>
</feature>
<feature type="compositionally biased region" description="Low complexity" evidence="2">
    <location>
        <begin position="331"/>
        <end position="349"/>
    </location>
</feature>
<feature type="lipid moiety-binding region" description="N-palmitoyl cysteine" evidence="1">
    <location>
        <position position="32"/>
    </location>
</feature>
<feature type="lipid moiety-binding region" description="S-diacylglycerol cysteine" evidence="1">
    <location>
        <position position="32"/>
    </location>
</feature>
<protein>
    <recommendedName>
        <fullName evidence="1">Penicillin-binding protein activator LpoA</fullName>
        <shortName evidence="1">PBP activator LpoA</shortName>
    </recommendedName>
</protein>
<gene>
    <name evidence="1" type="primary">lpoA</name>
    <name type="ordered locus">Spro_4336</name>
</gene>
<proteinExistence type="inferred from homology"/>
<comment type="function">
    <text evidence="1">Regulator of peptidoglycan synthesis that is essential for the function of penicillin-binding protein 1A (PBP1a).</text>
</comment>
<comment type="subunit">
    <text evidence="1">Interacts with PBP1a.</text>
</comment>
<comment type="subcellular location">
    <subcellularLocation>
        <location evidence="1">Cell outer membrane</location>
        <topology evidence="1">Lipid-anchor</topology>
        <orientation evidence="1">Periplasmic side</orientation>
    </subcellularLocation>
</comment>
<comment type="similarity">
    <text evidence="1">Belongs to the LpoA family.</text>
</comment>
<accession>A8GJZ0</accession>
<reference key="1">
    <citation type="submission" date="2007-09" db="EMBL/GenBank/DDBJ databases">
        <title>Complete sequence of chromosome of Serratia proteamaculans 568.</title>
        <authorList>
            <consortium name="US DOE Joint Genome Institute"/>
            <person name="Copeland A."/>
            <person name="Lucas S."/>
            <person name="Lapidus A."/>
            <person name="Barry K."/>
            <person name="Glavina del Rio T."/>
            <person name="Dalin E."/>
            <person name="Tice H."/>
            <person name="Pitluck S."/>
            <person name="Chain P."/>
            <person name="Malfatti S."/>
            <person name="Shin M."/>
            <person name="Vergez L."/>
            <person name="Schmutz J."/>
            <person name="Larimer F."/>
            <person name="Land M."/>
            <person name="Hauser L."/>
            <person name="Kyrpides N."/>
            <person name="Kim E."/>
            <person name="Taghavi S."/>
            <person name="Newman L."/>
            <person name="Vangronsveld J."/>
            <person name="van der Lelie D."/>
            <person name="Richardson P."/>
        </authorList>
    </citation>
    <scope>NUCLEOTIDE SEQUENCE [LARGE SCALE GENOMIC DNA]</scope>
    <source>
        <strain>568</strain>
    </source>
</reference>
<keyword id="KW-0998">Cell outer membrane</keyword>
<keyword id="KW-0133">Cell shape</keyword>
<keyword id="KW-0449">Lipoprotein</keyword>
<keyword id="KW-0472">Membrane</keyword>
<keyword id="KW-0564">Palmitate</keyword>
<keyword id="KW-0573">Peptidoglycan synthesis</keyword>
<keyword id="KW-0732">Signal</keyword>
<name>LPOA_SERP5</name>